<organism>
    <name type="scientific">Pseudoalteromonas atlantica (strain T6c / ATCC BAA-1087)</name>
    <dbReference type="NCBI Taxonomy" id="3042615"/>
    <lineage>
        <taxon>Bacteria</taxon>
        <taxon>Pseudomonadati</taxon>
        <taxon>Pseudomonadota</taxon>
        <taxon>Gammaproteobacteria</taxon>
        <taxon>Alteromonadales</taxon>
        <taxon>Alteromonadaceae</taxon>
        <taxon>Paraglaciecola</taxon>
    </lineage>
</organism>
<protein>
    <recommendedName>
        <fullName evidence="1">Beta-ketoacyl-[acyl-carrier-protein] synthase III</fullName>
        <shortName evidence="1">Beta-ketoacyl-ACP synthase III</shortName>
        <shortName evidence="1">KAS III</shortName>
        <ecNumber evidence="1">2.3.1.180</ecNumber>
    </recommendedName>
    <alternativeName>
        <fullName evidence="1">3-oxoacyl-[acyl-carrier-protein] synthase 3</fullName>
    </alternativeName>
    <alternativeName>
        <fullName evidence="1">3-oxoacyl-[acyl-carrier-protein] synthase III</fullName>
    </alternativeName>
</protein>
<evidence type="ECO:0000255" key="1">
    <source>
        <dbReference type="HAMAP-Rule" id="MF_01815"/>
    </source>
</evidence>
<name>FABH_PSEA6</name>
<comment type="function">
    <text evidence="1">Catalyzes the condensation reaction of fatty acid synthesis by the addition to an acyl acceptor of two carbons from malonyl-ACP. Catalyzes the first condensation reaction which initiates fatty acid synthesis and may therefore play a role in governing the total rate of fatty acid production. Possesses both acetoacetyl-ACP synthase and acetyl transacylase activities. Its substrate specificity determines the biosynthesis of branched-chain and/or straight-chain of fatty acids.</text>
</comment>
<comment type="catalytic activity">
    <reaction evidence="1">
        <text>malonyl-[ACP] + acetyl-CoA + H(+) = 3-oxobutanoyl-[ACP] + CO2 + CoA</text>
        <dbReference type="Rhea" id="RHEA:12080"/>
        <dbReference type="Rhea" id="RHEA-COMP:9623"/>
        <dbReference type="Rhea" id="RHEA-COMP:9625"/>
        <dbReference type="ChEBI" id="CHEBI:15378"/>
        <dbReference type="ChEBI" id="CHEBI:16526"/>
        <dbReference type="ChEBI" id="CHEBI:57287"/>
        <dbReference type="ChEBI" id="CHEBI:57288"/>
        <dbReference type="ChEBI" id="CHEBI:78449"/>
        <dbReference type="ChEBI" id="CHEBI:78450"/>
        <dbReference type="EC" id="2.3.1.180"/>
    </reaction>
</comment>
<comment type="pathway">
    <text evidence="1">Lipid metabolism; fatty acid biosynthesis.</text>
</comment>
<comment type="subunit">
    <text evidence="1">Homodimer.</text>
</comment>
<comment type="subcellular location">
    <subcellularLocation>
        <location evidence="1">Cytoplasm</location>
    </subcellularLocation>
</comment>
<comment type="domain">
    <text evidence="1">The last Arg residue of the ACP-binding site is essential for the weak association between ACP/AcpP and FabH.</text>
</comment>
<comment type="similarity">
    <text evidence="1">Belongs to the thiolase-like superfamily. FabH family.</text>
</comment>
<sequence>MNSRIIGTGSYYPSDVRTNADLSLMVDTSDEWITDRTGIKERRIIGEHETAATMGFEASKKALEAAGIDAKSLDMIVCATTSGRYSLPSTACEIQKALDVDGIPAFDVAAACAGYCYALSVADQYIKSGMAKRILVVGTDCLSRMISPEDRTMVILFGDAAGATIIEASEEPGILSTHIHAAGSYGDLLAIGNPTRGDESSIHENWGSMKGNEVFRVAVTKLSEIVEETLAANNMQKSDLDWLVPHQANFRIIKATAKKLDMSLDQVVITLERYGNTSAATVPTALDEAIRDGRIKRGQNLLLEAFGGGFAWASALVRY</sequence>
<reference key="1">
    <citation type="submission" date="2006-06" db="EMBL/GenBank/DDBJ databases">
        <title>Complete sequence of Pseudoalteromonas atlantica T6c.</title>
        <authorList>
            <consortium name="US DOE Joint Genome Institute"/>
            <person name="Copeland A."/>
            <person name="Lucas S."/>
            <person name="Lapidus A."/>
            <person name="Barry K."/>
            <person name="Detter J.C."/>
            <person name="Glavina del Rio T."/>
            <person name="Hammon N."/>
            <person name="Israni S."/>
            <person name="Dalin E."/>
            <person name="Tice H."/>
            <person name="Pitluck S."/>
            <person name="Saunders E."/>
            <person name="Brettin T."/>
            <person name="Bruce D."/>
            <person name="Han C."/>
            <person name="Tapia R."/>
            <person name="Gilna P."/>
            <person name="Schmutz J."/>
            <person name="Larimer F."/>
            <person name="Land M."/>
            <person name="Hauser L."/>
            <person name="Kyrpides N."/>
            <person name="Kim E."/>
            <person name="Karls A.C."/>
            <person name="Bartlett D."/>
            <person name="Higgins B.P."/>
            <person name="Richardson P."/>
        </authorList>
    </citation>
    <scope>NUCLEOTIDE SEQUENCE [LARGE SCALE GENOMIC DNA]</scope>
    <source>
        <strain>T6c / ATCC BAA-1087</strain>
    </source>
</reference>
<gene>
    <name evidence="1" type="primary">fabH</name>
    <name type="ordered locus">Patl_2124</name>
</gene>
<dbReference type="EC" id="2.3.1.180" evidence="1"/>
<dbReference type="EMBL" id="CP000388">
    <property type="protein sequence ID" value="ABG40642.1"/>
    <property type="molecule type" value="Genomic_DNA"/>
</dbReference>
<dbReference type="RefSeq" id="WP_011574929.1">
    <property type="nucleotide sequence ID" value="NC_008228.1"/>
</dbReference>
<dbReference type="SMR" id="Q15TZ6"/>
<dbReference type="STRING" id="342610.Patl_2124"/>
<dbReference type="KEGG" id="pat:Patl_2124"/>
<dbReference type="eggNOG" id="COG0332">
    <property type="taxonomic scope" value="Bacteria"/>
</dbReference>
<dbReference type="HOGENOM" id="CLU_039592_3_1_6"/>
<dbReference type="OrthoDB" id="9815506at2"/>
<dbReference type="UniPathway" id="UPA00094"/>
<dbReference type="Proteomes" id="UP000001981">
    <property type="component" value="Chromosome"/>
</dbReference>
<dbReference type="GO" id="GO:0005737">
    <property type="term" value="C:cytoplasm"/>
    <property type="evidence" value="ECO:0007669"/>
    <property type="project" value="UniProtKB-SubCell"/>
</dbReference>
<dbReference type="GO" id="GO:0004315">
    <property type="term" value="F:3-oxoacyl-[acyl-carrier-protein] synthase activity"/>
    <property type="evidence" value="ECO:0007669"/>
    <property type="project" value="InterPro"/>
</dbReference>
<dbReference type="GO" id="GO:0033818">
    <property type="term" value="F:beta-ketoacyl-acyl-carrier-protein synthase III activity"/>
    <property type="evidence" value="ECO:0007669"/>
    <property type="project" value="UniProtKB-UniRule"/>
</dbReference>
<dbReference type="GO" id="GO:0006633">
    <property type="term" value="P:fatty acid biosynthetic process"/>
    <property type="evidence" value="ECO:0007669"/>
    <property type="project" value="UniProtKB-UniRule"/>
</dbReference>
<dbReference type="CDD" id="cd00830">
    <property type="entry name" value="KAS_III"/>
    <property type="match status" value="1"/>
</dbReference>
<dbReference type="FunFam" id="3.40.47.10:FF:000004">
    <property type="entry name" value="3-oxoacyl-[acyl-carrier-protein] synthase 3"/>
    <property type="match status" value="1"/>
</dbReference>
<dbReference type="Gene3D" id="3.40.47.10">
    <property type="match status" value="1"/>
</dbReference>
<dbReference type="HAMAP" id="MF_01815">
    <property type="entry name" value="FabH"/>
    <property type="match status" value="1"/>
</dbReference>
<dbReference type="InterPro" id="IPR013747">
    <property type="entry name" value="ACP_syn_III_C"/>
</dbReference>
<dbReference type="InterPro" id="IPR013751">
    <property type="entry name" value="ACP_syn_III_N"/>
</dbReference>
<dbReference type="InterPro" id="IPR004655">
    <property type="entry name" value="FabH"/>
</dbReference>
<dbReference type="InterPro" id="IPR016039">
    <property type="entry name" value="Thiolase-like"/>
</dbReference>
<dbReference type="NCBIfam" id="TIGR00747">
    <property type="entry name" value="fabH"/>
    <property type="match status" value="1"/>
</dbReference>
<dbReference type="NCBIfam" id="NF006829">
    <property type="entry name" value="PRK09352.1"/>
    <property type="match status" value="1"/>
</dbReference>
<dbReference type="PANTHER" id="PTHR43091">
    <property type="entry name" value="3-OXOACYL-[ACYL-CARRIER-PROTEIN] SYNTHASE"/>
    <property type="match status" value="1"/>
</dbReference>
<dbReference type="PANTHER" id="PTHR43091:SF1">
    <property type="entry name" value="BETA-KETOACYL-[ACYL-CARRIER-PROTEIN] SYNTHASE III, CHLOROPLASTIC"/>
    <property type="match status" value="1"/>
</dbReference>
<dbReference type="Pfam" id="PF08545">
    <property type="entry name" value="ACP_syn_III"/>
    <property type="match status" value="1"/>
</dbReference>
<dbReference type="Pfam" id="PF08541">
    <property type="entry name" value="ACP_syn_III_C"/>
    <property type="match status" value="1"/>
</dbReference>
<dbReference type="SUPFAM" id="SSF53901">
    <property type="entry name" value="Thiolase-like"/>
    <property type="match status" value="1"/>
</dbReference>
<keyword id="KW-0012">Acyltransferase</keyword>
<keyword id="KW-0963">Cytoplasm</keyword>
<keyword id="KW-0275">Fatty acid biosynthesis</keyword>
<keyword id="KW-0276">Fatty acid metabolism</keyword>
<keyword id="KW-0444">Lipid biosynthesis</keyword>
<keyword id="KW-0443">Lipid metabolism</keyword>
<keyword id="KW-0511">Multifunctional enzyme</keyword>
<keyword id="KW-0808">Transferase</keyword>
<accession>Q15TZ6</accession>
<proteinExistence type="inferred from homology"/>
<feature type="chain" id="PRO_1000056392" description="Beta-ketoacyl-[acyl-carrier-protein] synthase III">
    <location>
        <begin position="1"/>
        <end position="319"/>
    </location>
</feature>
<feature type="region of interest" description="ACP-binding" evidence="1">
    <location>
        <begin position="247"/>
        <end position="251"/>
    </location>
</feature>
<feature type="active site" evidence="1">
    <location>
        <position position="112"/>
    </location>
</feature>
<feature type="active site" evidence="1">
    <location>
        <position position="246"/>
    </location>
</feature>
<feature type="active site" evidence="1">
    <location>
        <position position="276"/>
    </location>
</feature>